<proteinExistence type="inferred from homology"/>
<dbReference type="EMBL" id="CP000407">
    <property type="protein sequence ID" value="ABP89056.1"/>
    <property type="molecule type" value="Genomic_DNA"/>
</dbReference>
<dbReference type="SMR" id="A4VSG7"/>
<dbReference type="STRING" id="391295.SSU05_0084"/>
<dbReference type="KEGG" id="ssu:SSU05_0084"/>
<dbReference type="eggNOG" id="COG0096">
    <property type="taxonomic scope" value="Bacteria"/>
</dbReference>
<dbReference type="HOGENOM" id="CLU_098428_0_2_9"/>
<dbReference type="GO" id="GO:1990904">
    <property type="term" value="C:ribonucleoprotein complex"/>
    <property type="evidence" value="ECO:0007669"/>
    <property type="project" value="UniProtKB-KW"/>
</dbReference>
<dbReference type="GO" id="GO:0005840">
    <property type="term" value="C:ribosome"/>
    <property type="evidence" value="ECO:0007669"/>
    <property type="project" value="UniProtKB-KW"/>
</dbReference>
<dbReference type="GO" id="GO:0019843">
    <property type="term" value="F:rRNA binding"/>
    <property type="evidence" value="ECO:0007669"/>
    <property type="project" value="UniProtKB-UniRule"/>
</dbReference>
<dbReference type="GO" id="GO:0003735">
    <property type="term" value="F:structural constituent of ribosome"/>
    <property type="evidence" value="ECO:0007669"/>
    <property type="project" value="InterPro"/>
</dbReference>
<dbReference type="GO" id="GO:0006412">
    <property type="term" value="P:translation"/>
    <property type="evidence" value="ECO:0007669"/>
    <property type="project" value="UniProtKB-UniRule"/>
</dbReference>
<dbReference type="FunFam" id="3.30.1370.30:FF:000002">
    <property type="entry name" value="30S ribosomal protein S8"/>
    <property type="match status" value="1"/>
</dbReference>
<dbReference type="FunFam" id="3.30.1490.10:FF:000001">
    <property type="entry name" value="30S ribosomal protein S8"/>
    <property type="match status" value="1"/>
</dbReference>
<dbReference type="Gene3D" id="3.30.1370.30">
    <property type="match status" value="1"/>
</dbReference>
<dbReference type="Gene3D" id="3.30.1490.10">
    <property type="match status" value="1"/>
</dbReference>
<dbReference type="HAMAP" id="MF_01302_B">
    <property type="entry name" value="Ribosomal_uS8_B"/>
    <property type="match status" value="1"/>
</dbReference>
<dbReference type="InterPro" id="IPR000630">
    <property type="entry name" value="Ribosomal_uS8"/>
</dbReference>
<dbReference type="InterPro" id="IPR047863">
    <property type="entry name" value="Ribosomal_uS8_CS"/>
</dbReference>
<dbReference type="InterPro" id="IPR035987">
    <property type="entry name" value="Ribosomal_uS8_sf"/>
</dbReference>
<dbReference type="NCBIfam" id="NF001109">
    <property type="entry name" value="PRK00136.1"/>
    <property type="match status" value="1"/>
</dbReference>
<dbReference type="PANTHER" id="PTHR11758">
    <property type="entry name" value="40S RIBOSOMAL PROTEIN S15A"/>
    <property type="match status" value="1"/>
</dbReference>
<dbReference type="Pfam" id="PF00410">
    <property type="entry name" value="Ribosomal_S8"/>
    <property type="match status" value="1"/>
</dbReference>
<dbReference type="SUPFAM" id="SSF56047">
    <property type="entry name" value="Ribosomal protein S8"/>
    <property type="match status" value="1"/>
</dbReference>
<dbReference type="PROSITE" id="PS00053">
    <property type="entry name" value="RIBOSOMAL_S8"/>
    <property type="match status" value="1"/>
</dbReference>
<keyword id="KW-0687">Ribonucleoprotein</keyword>
<keyword id="KW-0689">Ribosomal protein</keyword>
<keyword id="KW-0694">RNA-binding</keyword>
<keyword id="KW-0699">rRNA-binding</keyword>
<reference key="1">
    <citation type="journal article" date="2007" name="PLoS ONE">
        <title>A glimpse of streptococcal toxic shock syndrome from comparative genomics of S. suis 2 Chinese isolates.</title>
        <authorList>
            <person name="Chen C."/>
            <person name="Tang J."/>
            <person name="Dong W."/>
            <person name="Wang C."/>
            <person name="Feng Y."/>
            <person name="Wang J."/>
            <person name="Zheng F."/>
            <person name="Pan X."/>
            <person name="Liu D."/>
            <person name="Li M."/>
            <person name="Song Y."/>
            <person name="Zhu X."/>
            <person name="Sun H."/>
            <person name="Feng T."/>
            <person name="Guo Z."/>
            <person name="Ju A."/>
            <person name="Ge J."/>
            <person name="Dong Y."/>
            <person name="Sun W."/>
            <person name="Jiang Y."/>
            <person name="Wang J."/>
            <person name="Yan J."/>
            <person name="Yang H."/>
            <person name="Wang X."/>
            <person name="Gao G.F."/>
            <person name="Yang R."/>
            <person name="Wang J."/>
            <person name="Yu J."/>
        </authorList>
    </citation>
    <scope>NUCLEOTIDE SEQUENCE [LARGE SCALE GENOMIC DNA]</scope>
    <source>
        <strain>05ZYH33</strain>
    </source>
</reference>
<accession>A4VSG7</accession>
<name>RS8_STRSY</name>
<organism>
    <name type="scientific">Streptococcus suis (strain 05ZYH33)</name>
    <dbReference type="NCBI Taxonomy" id="391295"/>
    <lineage>
        <taxon>Bacteria</taxon>
        <taxon>Bacillati</taxon>
        <taxon>Bacillota</taxon>
        <taxon>Bacilli</taxon>
        <taxon>Lactobacillales</taxon>
        <taxon>Streptococcaceae</taxon>
        <taxon>Streptococcus</taxon>
    </lineage>
</organism>
<protein>
    <recommendedName>
        <fullName evidence="1">Small ribosomal subunit protein uS8</fullName>
    </recommendedName>
    <alternativeName>
        <fullName evidence="2">30S ribosomal protein S8</fullName>
    </alternativeName>
</protein>
<sequence length="132" mass="14690">MVMTDPIADFLTRIRNANQAKHEVLEVPASNIKKGIATILKNEGFVKNVEFIEDDKQGIIRVFLKYGPNGEKVITNLKRVSKPGLRVYSKREDIPKVLNGLGIAIISTSEGLLTDKQARQKNVGGEVIAYVW</sequence>
<feature type="chain" id="PRO_0000305756" description="Small ribosomal subunit protein uS8">
    <location>
        <begin position="1"/>
        <end position="132"/>
    </location>
</feature>
<gene>
    <name evidence="1" type="primary">rpsH</name>
    <name type="ordered locus">SSU05_0084</name>
</gene>
<comment type="function">
    <text evidence="1">One of the primary rRNA binding proteins, it binds directly to 16S rRNA central domain where it helps coordinate assembly of the platform of the 30S subunit.</text>
</comment>
<comment type="subunit">
    <text evidence="1">Part of the 30S ribosomal subunit. Contacts proteins S5 and S12.</text>
</comment>
<comment type="similarity">
    <text evidence="1">Belongs to the universal ribosomal protein uS8 family.</text>
</comment>
<evidence type="ECO:0000255" key="1">
    <source>
        <dbReference type="HAMAP-Rule" id="MF_01302"/>
    </source>
</evidence>
<evidence type="ECO:0000305" key="2"/>